<organism>
    <name type="scientific">Dehalococcoides mccartyi (strain ATCC BAA-2100 / JCM 16839 / KCTC 5957 / BAV1)</name>
    <dbReference type="NCBI Taxonomy" id="216389"/>
    <lineage>
        <taxon>Bacteria</taxon>
        <taxon>Bacillati</taxon>
        <taxon>Chloroflexota</taxon>
        <taxon>Dehalococcoidia</taxon>
        <taxon>Dehalococcoidales</taxon>
        <taxon>Dehalococcoidaceae</taxon>
        <taxon>Dehalococcoides</taxon>
    </lineage>
</organism>
<comment type="function">
    <text evidence="1">Channel that opens in response to stretch forces in the membrane lipid bilayer. May participate in the regulation of osmotic pressure changes within the cell.</text>
</comment>
<comment type="subunit">
    <text evidence="1">Homopentamer.</text>
</comment>
<comment type="subcellular location">
    <subcellularLocation>
        <location evidence="1">Cell membrane</location>
        <topology evidence="1">Multi-pass membrane protein</topology>
    </subcellularLocation>
</comment>
<comment type="similarity">
    <text evidence="1">Belongs to the MscL family.</text>
</comment>
<dbReference type="EMBL" id="CP000688">
    <property type="protein sequence ID" value="ABQ17776.1"/>
    <property type="molecule type" value="Genomic_DNA"/>
</dbReference>
<dbReference type="KEGG" id="deb:DehaBAV1_1197"/>
<dbReference type="PATRIC" id="fig|216389.18.peg.1262"/>
<dbReference type="HOGENOM" id="CLU_095787_2_3_0"/>
<dbReference type="GO" id="GO:0005886">
    <property type="term" value="C:plasma membrane"/>
    <property type="evidence" value="ECO:0007669"/>
    <property type="project" value="UniProtKB-SubCell"/>
</dbReference>
<dbReference type="GO" id="GO:0008381">
    <property type="term" value="F:mechanosensitive monoatomic ion channel activity"/>
    <property type="evidence" value="ECO:0007669"/>
    <property type="project" value="UniProtKB-UniRule"/>
</dbReference>
<dbReference type="Gene3D" id="1.10.1200.120">
    <property type="entry name" value="Large-conductance mechanosensitive channel, MscL, domain 1"/>
    <property type="match status" value="1"/>
</dbReference>
<dbReference type="HAMAP" id="MF_00115">
    <property type="entry name" value="MscL"/>
    <property type="match status" value="1"/>
</dbReference>
<dbReference type="InterPro" id="IPR019823">
    <property type="entry name" value="Mechanosensitive_channel_CS"/>
</dbReference>
<dbReference type="InterPro" id="IPR001185">
    <property type="entry name" value="MS_channel"/>
</dbReference>
<dbReference type="InterPro" id="IPR037673">
    <property type="entry name" value="MSC/AndL"/>
</dbReference>
<dbReference type="InterPro" id="IPR036019">
    <property type="entry name" value="MscL_channel"/>
</dbReference>
<dbReference type="NCBIfam" id="TIGR00220">
    <property type="entry name" value="mscL"/>
    <property type="match status" value="1"/>
</dbReference>
<dbReference type="PANTHER" id="PTHR30266:SF2">
    <property type="entry name" value="LARGE-CONDUCTANCE MECHANOSENSITIVE CHANNEL"/>
    <property type="match status" value="1"/>
</dbReference>
<dbReference type="PANTHER" id="PTHR30266">
    <property type="entry name" value="MECHANOSENSITIVE CHANNEL MSCL"/>
    <property type="match status" value="1"/>
</dbReference>
<dbReference type="Pfam" id="PF01741">
    <property type="entry name" value="MscL"/>
    <property type="match status" value="1"/>
</dbReference>
<dbReference type="PRINTS" id="PR01264">
    <property type="entry name" value="MECHCHANNEL"/>
</dbReference>
<dbReference type="SUPFAM" id="SSF81330">
    <property type="entry name" value="Gated mechanosensitive channel"/>
    <property type="match status" value="1"/>
</dbReference>
<dbReference type="PROSITE" id="PS01327">
    <property type="entry name" value="MSCL"/>
    <property type="match status" value="1"/>
</dbReference>
<proteinExistence type="inferred from homology"/>
<gene>
    <name evidence="1" type="primary">mscL</name>
    <name type="ordered locus">DehaBAV1_1197</name>
</gene>
<evidence type="ECO:0000255" key="1">
    <source>
        <dbReference type="HAMAP-Rule" id="MF_00115"/>
    </source>
</evidence>
<reference key="1">
    <citation type="submission" date="2007-05" db="EMBL/GenBank/DDBJ databases">
        <title>Complete sequence of Dehalococcoides sp. BAV1.</title>
        <authorList>
            <consortium name="US DOE Joint Genome Institute"/>
            <person name="Copeland A."/>
            <person name="Lucas S."/>
            <person name="Lapidus A."/>
            <person name="Barry K."/>
            <person name="Detter J.C."/>
            <person name="Glavina del Rio T."/>
            <person name="Hammon N."/>
            <person name="Israni S."/>
            <person name="Pitluck S."/>
            <person name="Lowry S."/>
            <person name="Clum A."/>
            <person name="Schmutz J."/>
            <person name="Larimer F."/>
            <person name="Land M."/>
            <person name="Hauser L."/>
            <person name="Kyrpides N."/>
            <person name="Kim E."/>
            <person name="Ritalahti K.M."/>
            <person name="Loeffler F."/>
            <person name="Richardson P."/>
        </authorList>
    </citation>
    <scope>NUCLEOTIDE SEQUENCE [LARGE SCALE GENOMIC DNA]</scope>
    <source>
        <strain>ATCC BAA-2100 / JCM 16839 / KCTC 5957 / BAV1</strain>
    </source>
</reference>
<keyword id="KW-1003">Cell membrane</keyword>
<keyword id="KW-0407">Ion channel</keyword>
<keyword id="KW-0406">Ion transport</keyword>
<keyword id="KW-0472">Membrane</keyword>
<keyword id="KW-0812">Transmembrane</keyword>
<keyword id="KW-1133">Transmembrane helix</keyword>
<keyword id="KW-0813">Transport</keyword>
<feature type="chain" id="PRO_1000076038" description="Large-conductance mechanosensitive channel">
    <location>
        <begin position="1"/>
        <end position="154"/>
    </location>
</feature>
<feature type="transmembrane region" description="Helical" evidence="1">
    <location>
        <begin position="14"/>
        <end position="34"/>
    </location>
</feature>
<feature type="transmembrane region" description="Helical" evidence="1">
    <location>
        <begin position="86"/>
        <end position="106"/>
    </location>
</feature>
<sequence>MFKEFKIFIMRGNVVDLAVGIVIGAAFGAIVNSLVKDVLMPPIGLLLGNVDFGNLFIVLKEGAIGGPYESLLVAQTAGAVTINYGVFINALINFLILAMAIFFFVVRPLNQLAARQKSKEAVIPAQTDKKDCPYCATQIPLKASKCPYCTSELM</sequence>
<protein>
    <recommendedName>
        <fullName evidence="1">Large-conductance mechanosensitive channel</fullName>
    </recommendedName>
</protein>
<accession>A5FPV4</accession>
<name>MSCL_DEHMB</name>